<feature type="chain" id="PRO_0000374255" description="tRNA-2-methylthio-N(6)-dimethylallyladenosine synthase">
    <location>
        <begin position="1"/>
        <end position="418"/>
    </location>
</feature>
<feature type="domain" description="MTTase N-terminal" evidence="1">
    <location>
        <begin position="2"/>
        <end position="118"/>
    </location>
</feature>
<feature type="domain" description="Radical SAM core" evidence="2">
    <location>
        <begin position="120"/>
        <end position="352"/>
    </location>
</feature>
<feature type="domain" description="TRAM" evidence="1">
    <location>
        <begin position="354"/>
        <end position="414"/>
    </location>
</feature>
<feature type="binding site" evidence="1">
    <location>
        <position position="11"/>
    </location>
    <ligand>
        <name>[4Fe-4S] cluster</name>
        <dbReference type="ChEBI" id="CHEBI:49883"/>
        <label>1</label>
    </ligand>
</feature>
<feature type="binding site" evidence="1">
    <location>
        <position position="47"/>
    </location>
    <ligand>
        <name>[4Fe-4S] cluster</name>
        <dbReference type="ChEBI" id="CHEBI:49883"/>
        <label>1</label>
    </ligand>
</feature>
<feature type="binding site" evidence="1">
    <location>
        <position position="81"/>
    </location>
    <ligand>
        <name>[4Fe-4S] cluster</name>
        <dbReference type="ChEBI" id="CHEBI:49883"/>
        <label>1</label>
    </ligand>
</feature>
<feature type="binding site" evidence="1">
    <location>
        <position position="134"/>
    </location>
    <ligand>
        <name>[4Fe-4S] cluster</name>
        <dbReference type="ChEBI" id="CHEBI:49883"/>
        <label>2</label>
        <note>4Fe-4S-S-AdoMet</note>
    </ligand>
</feature>
<feature type="binding site" evidence="1">
    <location>
        <position position="138"/>
    </location>
    <ligand>
        <name>[4Fe-4S] cluster</name>
        <dbReference type="ChEBI" id="CHEBI:49883"/>
        <label>2</label>
        <note>4Fe-4S-S-AdoMet</note>
    </ligand>
</feature>
<feature type="binding site" evidence="1">
    <location>
        <position position="141"/>
    </location>
    <ligand>
        <name>[4Fe-4S] cluster</name>
        <dbReference type="ChEBI" id="CHEBI:49883"/>
        <label>2</label>
        <note>4Fe-4S-S-AdoMet</note>
    </ligand>
</feature>
<protein>
    <recommendedName>
        <fullName evidence="1">tRNA-2-methylthio-N(6)-dimethylallyladenosine synthase</fullName>
        <ecNumber evidence="1">2.8.4.3</ecNumber>
    </recommendedName>
    <alternativeName>
        <fullName evidence="1">(Dimethylallyl)adenosine tRNA methylthiotransferase MiaB</fullName>
    </alternativeName>
    <alternativeName>
        <fullName evidence="1">tRNA-i(6)A37 methylthiotransferase</fullName>
    </alternativeName>
</protein>
<reference key="1">
    <citation type="journal article" date="2005" name="Science">
        <title>Genome sequence of the PCE-dechlorinating bacterium Dehalococcoides ethenogenes.</title>
        <authorList>
            <person name="Seshadri R."/>
            <person name="Adrian L."/>
            <person name="Fouts D.E."/>
            <person name="Eisen J.A."/>
            <person name="Phillippy A.M."/>
            <person name="Methe B.A."/>
            <person name="Ward N.L."/>
            <person name="Nelson W.C."/>
            <person name="DeBoy R.T."/>
            <person name="Khouri H.M."/>
            <person name="Kolonay J.F."/>
            <person name="Dodson R.J."/>
            <person name="Daugherty S.C."/>
            <person name="Brinkac L.M."/>
            <person name="Sullivan S.A."/>
            <person name="Madupu R."/>
            <person name="Nelson K.E."/>
            <person name="Kang K.H."/>
            <person name="Impraim M."/>
            <person name="Tran K."/>
            <person name="Robinson J.M."/>
            <person name="Forberger H.A."/>
            <person name="Fraser C.M."/>
            <person name="Zinder S.H."/>
            <person name="Heidelberg J.F."/>
        </authorList>
    </citation>
    <scope>NUCLEOTIDE SEQUENCE [LARGE SCALE GENOMIC DNA]</scope>
    <source>
        <strain>ATCC BAA-2266 / KCTC 15142 / 195</strain>
    </source>
</reference>
<name>MIAB_DEHM1</name>
<sequence>MPGYYLWTIGCQMNQAESERLGRLFELWGYSLADKAEDAELVLVNSCVVREHAENKVINRLHILRKLKDKNPRLKIALTGCLVGQDIASVRKKFPFVDYIFQPGALPDWGEIPEGFILPLKPPVSASITIMQGCDNFCTYCIVPYRRGREKSRSISELCCEAAELVRRGSREVVLLGQNVDSYGHDLPEKPCLADLLYALSDIPGLLRIRFLTSHPKDISQKLIDAMASLHKVCHSLSLPVQAGADTILAAMRRGYTSEQYRELVGRLKTAMPDISLQTDLIVGFPSETAEQFDQSYKLMSDIGYDAIHVAAYSPRPQTAAARDMADDVPVAEKKRRLKLIEDLQKETVSKANSALVDTFAEVLVEGRQKNKWQGRTLGGKLVFLESDLPLEGCLINVKIFKASPWSLQAKLVKILES</sequence>
<accession>Q3Z6Q4</accession>
<gene>
    <name evidence="1" type="primary">miaB</name>
    <name type="ordered locus">DET1385</name>
</gene>
<organism>
    <name type="scientific">Dehalococcoides mccartyi (strain ATCC BAA-2266 / KCTC 15142 / 195)</name>
    <name type="common">Dehalococcoides ethenogenes (strain 195)</name>
    <dbReference type="NCBI Taxonomy" id="243164"/>
    <lineage>
        <taxon>Bacteria</taxon>
        <taxon>Bacillati</taxon>
        <taxon>Chloroflexota</taxon>
        <taxon>Dehalococcoidia</taxon>
        <taxon>Dehalococcoidales</taxon>
        <taxon>Dehalococcoidaceae</taxon>
        <taxon>Dehalococcoides</taxon>
    </lineage>
</organism>
<evidence type="ECO:0000255" key="1">
    <source>
        <dbReference type="HAMAP-Rule" id="MF_01864"/>
    </source>
</evidence>
<evidence type="ECO:0000255" key="2">
    <source>
        <dbReference type="PROSITE-ProRule" id="PRU01266"/>
    </source>
</evidence>
<proteinExistence type="inferred from homology"/>
<comment type="function">
    <text evidence="1">Catalyzes the methylthiolation of N6-(dimethylallyl)adenosine (i(6)A), leading to the formation of 2-methylthio-N6-(dimethylallyl)adenosine (ms(2)i(6)A) at position 37 in tRNAs that read codons beginning with uridine.</text>
</comment>
<comment type="catalytic activity">
    <reaction evidence="1">
        <text>N(6)-dimethylallyladenosine(37) in tRNA + (sulfur carrier)-SH + AH2 + 2 S-adenosyl-L-methionine = 2-methylsulfanyl-N(6)-dimethylallyladenosine(37) in tRNA + (sulfur carrier)-H + 5'-deoxyadenosine + L-methionine + A + S-adenosyl-L-homocysteine + 2 H(+)</text>
        <dbReference type="Rhea" id="RHEA:37067"/>
        <dbReference type="Rhea" id="RHEA-COMP:10375"/>
        <dbReference type="Rhea" id="RHEA-COMP:10376"/>
        <dbReference type="Rhea" id="RHEA-COMP:14737"/>
        <dbReference type="Rhea" id="RHEA-COMP:14739"/>
        <dbReference type="ChEBI" id="CHEBI:13193"/>
        <dbReference type="ChEBI" id="CHEBI:15378"/>
        <dbReference type="ChEBI" id="CHEBI:17319"/>
        <dbReference type="ChEBI" id="CHEBI:17499"/>
        <dbReference type="ChEBI" id="CHEBI:29917"/>
        <dbReference type="ChEBI" id="CHEBI:57844"/>
        <dbReference type="ChEBI" id="CHEBI:57856"/>
        <dbReference type="ChEBI" id="CHEBI:59789"/>
        <dbReference type="ChEBI" id="CHEBI:64428"/>
        <dbReference type="ChEBI" id="CHEBI:74415"/>
        <dbReference type="ChEBI" id="CHEBI:74417"/>
        <dbReference type="EC" id="2.8.4.3"/>
    </reaction>
</comment>
<comment type="cofactor">
    <cofactor evidence="1">
        <name>[4Fe-4S] cluster</name>
        <dbReference type="ChEBI" id="CHEBI:49883"/>
    </cofactor>
    <text evidence="1">Binds 2 [4Fe-4S] clusters. One cluster is coordinated with 3 cysteines and an exchangeable S-adenosyl-L-methionine.</text>
</comment>
<comment type="subunit">
    <text evidence="1">Monomer.</text>
</comment>
<comment type="subcellular location">
    <subcellularLocation>
        <location evidence="1">Cytoplasm</location>
    </subcellularLocation>
</comment>
<comment type="similarity">
    <text evidence="1">Belongs to the methylthiotransferase family. MiaB subfamily.</text>
</comment>
<keyword id="KW-0004">4Fe-4S</keyword>
<keyword id="KW-0963">Cytoplasm</keyword>
<keyword id="KW-0408">Iron</keyword>
<keyword id="KW-0411">Iron-sulfur</keyword>
<keyword id="KW-0479">Metal-binding</keyword>
<keyword id="KW-0949">S-adenosyl-L-methionine</keyword>
<keyword id="KW-0808">Transferase</keyword>
<keyword id="KW-0819">tRNA processing</keyword>
<dbReference type="EC" id="2.8.4.3" evidence="1"/>
<dbReference type="EMBL" id="CP000027">
    <property type="protein sequence ID" value="AAW39387.1"/>
    <property type="molecule type" value="Genomic_DNA"/>
</dbReference>
<dbReference type="RefSeq" id="WP_010937072.1">
    <property type="nucleotide sequence ID" value="NC_002936.3"/>
</dbReference>
<dbReference type="SMR" id="Q3Z6Q4"/>
<dbReference type="FunCoup" id="Q3Z6Q4">
    <property type="interactions" value="345"/>
</dbReference>
<dbReference type="STRING" id="243164.DET1385"/>
<dbReference type="GeneID" id="3229346"/>
<dbReference type="KEGG" id="det:DET1385"/>
<dbReference type="PATRIC" id="fig|243164.10.peg.1314"/>
<dbReference type="eggNOG" id="COG0621">
    <property type="taxonomic scope" value="Bacteria"/>
</dbReference>
<dbReference type="HOGENOM" id="CLU_018697_2_0_0"/>
<dbReference type="InParanoid" id="Q3Z6Q4"/>
<dbReference type="Proteomes" id="UP000008289">
    <property type="component" value="Chromosome"/>
</dbReference>
<dbReference type="GO" id="GO:0005829">
    <property type="term" value="C:cytosol"/>
    <property type="evidence" value="ECO:0007669"/>
    <property type="project" value="TreeGrafter"/>
</dbReference>
<dbReference type="GO" id="GO:0051539">
    <property type="term" value="F:4 iron, 4 sulfur cluster binding"/>
    <property type="evidence" value="ECO:0007669"/>
    <property type="project" value="UniProtKB-UniRule"/>
</dbReference>
<dbReference type="GO" id="GO:0046872">
    <property type="term" value="F:metal ion binding"/>
    <property type="evidence" value="ECO:0007669"/>
    <property type="project" value="UniProtKB-KW"/>
</dbReference>
<dbReference type="GO" id="GO:0035597">
    <property type="term" value="F:N6-isopentenyladenosine methylthiotransferase activity"/>
    <property type="evidence" value="ECO:0007669"/>
    <property type="project" value="TreeGrafter"/>
</dbReference>
<dbReference type="CDD" id="cd01335">
    <property type="entry name" value="Radical_SAM"/>
    <property type="match status" value="1"/>
</dbReference>
<dbReference type="FunFam" id="3.40.50.12160:FF:000003">
    <property type="entry name" value="CDK5 regulatory subunit-associated protein 1"/>
    <property type="match status" value="1"/>
</dbReference>
<dbReference type="FunFam" id="3.80.30.20:FF:000001">
    <property type="entry name" value="tRNA-2-methylthio-N(6)-dimethylallyladenosine synthase 2"/>
    <property type="match status" value="1"/>
</dbReference>
<dbReference type="Gene3D" id="3.40.50.12160">
    <property type="entry name" value="Methylthiotransferase, N-terminal domain"/>
    <property type="match status" value="1"/>
</dbReference>
<dbReference type="Gene3D" id="3.80.30.20">
    <property type="entry name" value="tm_1862 like domain"/>
    <property type="match status" value="1"/>
</dbReference>
<dbReference type="HAMAP" id="MF_01864">
    <property type="entry name" value="tRNA_metthiotr_MiaB"/>
    <property type="match status" value="1"/>
</dbReference>
<dbReference type="InterPro" id="IPR006638">
    <property type="entry name" value="Elp3/MiaA/NifB-like_rSAM"/>
</dbReference>
<dbReference type="InterPro" id="IPR005839">
    <property type="entry name" value="Methylthiotransferase"/>
</dbReference>
<dbReference type="InterPro" id="IPR020612">
    <property type="entry name" value="Methylthiotransferase_CS"/>
</dbReference>
<dbReference type="InterPro" id="IPR013848">
    <property type="entry name" value="Methylthiotransferase_N"/>
</dbReference>
<dbReference type="InterPro" id="IPR038135">
    <property type="entry name" value="Methylthiotransferase_N_sf"/>
</dbReference>
<dbReference type="InterPro" id="IPR006463">
    <property type="entry name" value="MiaB_methiolase"/>
</dbReference>
<dbReference type="InterPro" id="IPR007197">
    <property type="entry name" value="rSAM"/>
</dbReference>
<dbReference type="InterPro" id="IPR023404">
    <property type="entry name" value="rSAM_horseshoe"/>
</dbReference>
<dbReference type="InterPro" id="IPR002792">
    <property type="entry name" value="TRAM_dom"/>
</dbReference>
<dbReference type="NCBIfam" id="TIGR00089">
    <property type="entry name" value="MiaB/RimO family radical SAM methylthiotransferase"/>
    <property type="match status" value="1"/>
</dbReference>
<dbReference type="NCBIfam" id="NF010916">
    <property type="entry name" value="PRK14336.1"/>
    <property type="match status" value="1"/>
</dbReference>
<dbReference type="PANTHER" id="PTHR43020">
    <property type="entry name" value="CDK5 REGULATORY SUBUNIT-ASSOCIATED PROTEIN 1"/>
    <property type="match status" value="1"/>
</dbReference>
<dbReference type="PANTHER" id="PTHR43020:SF2">
    <property type="entry name" value="MITOCHONDRIAL TRNA METHYLTHIOTRANSFERASE CDK5RAP1"/>
    <property type="match status" value="1"/>
</dbReference>
<dbReference type="Pfam" id="PF04055">
    <property type="entry name" value="Radical_SAM"/>
    <property type="match status" value="1"/>
</dbReference>
<dbReference type="Pfam" id="PF01938">
    <property type="entry name" value="TRAM"/>
    <property type="match status" value="1"/>
</dbReference>
<dbReference type="Pfam" id="PF00919">
    <property type="entry name" value="UPF0004"/>
    <property type="match status" value="1"/>
</dbReference>
<dbReference type="SFLD" id="SFLDG01082">
    <property type="entry name" value="B12-binding_domain_containing"/>
    <property type="match status" value="1"/>
</dbReference>
<dbReference type="SFLD" id="SFLDG01061">
    <property type="entry name" value="methylthiotransferase"/>
    <property type="match status" value="1"/>
</dbReference>
<dbReference type="SFLD" id="SFLDS00029">
    <property type="entry name" value="Radical_SAM"/>
    <property type="match status" value="1"/>
</dbReference>
<dbReference type="SMART" id="SM00729">
    <property type="entry name" value="Elp3"/>
    <property type="match status" value="1"/>
</dbReference>
<dbReference type="SUPFAM" id="SSF102114">
    <property type="entry name" value="Radical SAM enzymes"/>
    <property type="match status" value="1"/>
</dbReference>
<dbReference type="PROSITE" id="PS51449">
    <property type="entry name" value="MTTASE_N"/>
    <property type="match status" value="1"/>
</dbReference>
<dbReference type="PROSITE" id="PS01278">
    <property type="entry name" value="MTTASE_RADICAL"/>
    <property type="match status" value="1"/>
</dbReference>
<dbReference type="PROSITE" id="PS51918">
    <property type="entry name" value="RADICAL_SAM"/>
    <property type="match status" value="1"/>
</dbReference>
<dbReference type="PROSITE" id="PS50926">
    <property type="entry name" value="TRAM"/>
    <property type="match status" value="1"/>
</dbReference>